<accession>A6URG2</accession>
<name>RIFK_METVS</name>
<dbReference type="EC" id="2.7.1.161" evidence="1"/>
<dbReference type="EMBL" id="CP000742">
    <property type="protein sequence ID" value="ABR55084.1"/>
    <property type="molecule type" value="Genomic_DNA"/>
</dbReference>
<dbReference type="RefSeq" id="WP_012065999.1">
    <property type="nucleotide sequence ID" value="NC_009634.1"/>
</dbReference>
<dbReference type="SMR" id="A6URG2"/>
<dbReference type="STRING" id="406327.Mevan_1186"/>
<dbReference type="GeneID" id="5325344"/>
<dbReference type="KEGG" id="mvn:Mevan_1186"/>
<dbReference type="eggNOG" id="arCOG01904">
    <property type="taxonomic scope" value="Archaea"/>
</dbReference>
<dbReference type="HOGENOM" id="CLU_140165_0_0_2"/>
<dbReference type="OrthoDB" id="30955at2157"/>
<dbReference type="UniPathway" id="UPA00276">
    <property type="reaction ID" value="UER00929"/>
</dbReference>
<dbReference type="Proteomes" id="UP000001107">
    <property type="component" value="Chromosome"/>
</dbReference>
<dbReference type="GO" id="GO:0000287">
    <property type="term" value="F:magnesium ion binding"/>
    <property type="evidence" value="ECO:0007669"/>
    <property type="project" value="UniProtKB-UniRule"/>
</dbReference>
<dbReference type="GO" id="GO:0000166">
    <property type="term" value="F:nucleotide binding"/>
    <property type="evidence" value="ECO:0007669"/>
    <property type="project" value="UniProtKB-UniRule"/>
</dbReference>
<dbReference type="GO" id="GO:0008531">
    <property type="term" value="F:riboflavin kinase activity"/>
    <property type="evidence" value="ECO:0007669"/>
    <property type="project" value="InterPro"/>
</dbReference>
<dbReference type="GO" id="GO:0009398">
    <property type="term" value="P:FMN biosynthetic process"/>
    <property type="evidence" value="ECO:0007669"/>
    <property type="project" value="UniProtKB-UniRule"/>
</dbReference>
<dbReference type="GO" id="GO:0009231">
    <property type="term" value="P:riboflavin biosynthetic process"/>
    <property type="evidence" value="ECO:0007669"/>
    <property type="project" value="InterPro"/>
</dbReference>
<dbReference type="Gene3D" id="2.40.30.30">
    <property type="entry name" value="Riboflavin kinase-like"/>
    <property type="match status" value="1"/>
</dbReference>
<dbReference type="HAMAP" id="MF_01285">
    <property type="entry name" value="Riboflavin_kinase"/>
    <property type="match status" value="1"/>
</dbReference>
<dbReference type="InterPro" id="IPR053397">
    <property type="entry name" value="Archaeal_Riboflavin_Kinase"/>
</dbReference>
<dbReference type="InterPro" id="IPR039063">
    <property type="entry name" value="RibK_CTP-dep"/>
</dbReference>
<dbReference type="InterPro" id="IPR023470">
    <property type="entry name" value="Riboflavin_kinase_archaeal"/>
</dbReference>
<dbReference type="InterPro" id="IPR023602">
    <property type="entry name" value="Riboflavin_kinase_CTP-dep"/>
</dbReference>
<dbReference type="InterPro" id="IPR023465">
    <property type="entry name" value="Riboflavin_kinase_dom_sf"/>
</dbReference>
<dbReference type="NCBIfam" id="NF040694">
    <property type="entry name" value="ribK_Meth"/>
    <property type="match status" value="1"/>
</dbReference>
<dbReference type="PANTHER" id="PTHR40706">
    <property type="entry name" value="RIBOFLAVIN KINASE"/>
    <property type="match status" value="1"/>
</dbReference>
<dbReference type="PANTHER" id="PTHR40706:SF1">
    <property type="entry name" value="RIBOFLAVIN KINASE"/>
    <property type="match status" value="1"/>
</dbReference>
<dbReference type="Pfam" id="PF01982">
    <property type="entry name" value="CTP-dep_RFKase"/>
    <property type="match status" value="1"/>
</dbReference>
<dbReference type="SUPFAM" id="SSF82114">
    <property type="entry name" value="Riboflavin kinase-like"/>
    <property type="match status" value="1"/>
</dbReference>
<gene>
    <name evidence="1" type="primary">ribK</name>
    <name type="ordered locus">Mevan_1186</name>
</gene>
<reference key="1">
    <citation type="submission" date="2007-06" db="EMBL/GenBank/DDBJ databases">
        <title>Complete sequence of Methanococcus vannielii SB.</title>
        <authorList>
            <consortium name="US DOE Joint Genome Institute"/>
            <person name="Copeland A."/>
            <person name="Lucas S."/>
            <person name="Lapidus A."/>
            <person name="Barry K."/>
            <person name="Glavina del Rio T."/>
            <person name="Dalin E."/>
            <person name="Tice H."/>
            <person name="Pitluck S."/>
            <person name="Chain P."/>
            <person name="Malfatti S."/>
            <person name="Shin M."/>
            <person name="Vergez L."/>
            <person name="Schmutz J."/>
            <person name="Larimer F."/>
            <person name="Land M."/>
            <person name="Hauser L."/>
            <person name="Kyrpides N."/>
            <person name="Anderson I."/>
            <person name="Sieprawska-Lupa M."/>
            <person name="Whitman W.B."/>
            <person name="Richardson P."/>
        </authorList>
    </citation>
    <scope>NUCLEOTIDE SEQUENCE [LARGE SCALE GENOMIC DNA]</scope>
    <source>
        <strain>ATCC 35089 / DSM 1224 / JCM 13029 / OCM 148 / SB</strain>
    </source>
</reference>
<sequence length="130" mass="14781">MKIFGRVVSGFGEGKYFVGLIPYKNKFKELTGFTPYEGTLNIKLKTYFDIDKYDPLEFDGFEIDGKEYFGGKVLLVTLFNKSGKFVDCAIVSPKKTDHSKKTLEIIAPVNLRKFLSLKNLDIVKIIQALK</sequence>
<feature type="chain" id="PRO_0000322074" description="Riboflavin kinase">
    <location>
        <begin position="1"/>
        <end position="130"/>
    </location>
</feature>
<feature type="binding site" evidence="1">
    <location>
        <begin position="10"/>
        <end position="15"/>
    </location>
    <ligand>
        <name>CDP</name>
        <dbReference type="ChEBI" id="CHEBI:58069"/>
    </ligand>
</feature>
<feature type="binding site" evidence="1">
    <location>
        <position position="39"/>
    </location>
    <ligand>
        <name>Mg(2+)</name>
        <dbReference type="ChEBI" id="CHEBI:18420"/>
    </ligand>
</feature>
<feature type="binding site" evidence="1">
    <location>
        <position position="41"/>
    </location>
    <ligand>
        <name>Mg(2+)</name>
        <dbReference type="ChEBI" id="CHEBI:18420"/>
    </ligand>
</feature>
<feature type="binding site" evidence="1">
    <location>
        <position position="96"/>
    </location>
    <ligand>
        <name>FMN</name>
        <dbReference type="ChEBI" id="CHEBI:58210"/>
    </ligand>
</feature>
<feature type="binding site" evidence="1">
    <location>
        <position position="104"/>
    </location>
    <ligand>
        <name>FMN</name>
        <dbReference type="ChEBI" id="CHEBI:58210"/>
    </ligand>
</feature>
<feature type="binding site" evidence="1">
    <location>
        <begin position="109"/>
        <end position="112"/>
    </location>
    <ligand>
        <name>CDP</name>
        <dbReference type="ChEBI" id="CHEBI:58069"/>
    </ligand>
</feature>
<keyword id="KW-0285">Flavoprotein</keyword>
<keyword id="KW-0288">FMN</keyword>
<keyword id="KW-0418">Kinase</keyword>
<keyword id="KW-0460">Magnesium</keyword>
<keyword id="KW-0479">Metal-binding</keyword>
<keyword id="KW-0547">Nucleotide-binding</keyword>
<keyword id="KW-0808">Transferase</keyword>
<protein>
    <recommendedName>
        <fullName evidence="1">Riboflavin kinase</fullName>
        <shortName evidence="1">RFK</shortName>
        <ecNumber evidence="1">2.7.1.161</ecNumber>
    </recommendedName>
    <alternativeName>
        <fullName evidence="1">CTP-dependent riboflavin kinase</fullName>
    </alternativeName>
    <alternativeName>
        <fullName evidence="1">CTP:riboflavin 5'-phosphotransferase</fullName>
    </alternativeName>
    <alternativeName>
        <fullName evidence="1">Flavokinase</fullName>
    </alternativeName>
</protein>
<proteinExistence type="inferred from homology"/>
<comment type="function">
    <text evidence="1">Catalyzes the CTP-dependent phosphorylation of riboflavin (vitamin B2) to form flavin mononucleotide (FMN).</text>
</comment>
<comment type="catalytic activity">
    <reaction evidence="1">
        <text>riboflavin + CTP = CDP + FMN + H(+)</text>
        <dbReference type="Rhea" id="RHEA:25021"/>
        <dbReference type="ChEBI" id="CHEBI:15378"/>
        <dbReference type="ChEBI" id="CHEBI:37563"/>
        <dbReference type="ChEBI" id="CHEBI:57986"/>
        <dbReference type="ChEBI" id="CHEBI:58069"/>
        <dbReference type="ChEBI" id="CHEBI:58210"/>
        <dbReference type="EC" id="2.7.1.161"/>
    </reaction>
</comment>
<comment type="cofactor">
    <cofactor evidence="1">
        <name>Mg(2+)</name>
        <dbReference type="ChEBI" id="CHEBI:18420"/>
    </cofactor>
    <text evidence="1">Binds 1 Mg(2+) ion per subunit.</text>
</comment>
<comment type="pathway">
    <text evidence="1">Cofactor biosynthesis; FMN biosynthesis; FMN from riboflavin (CTP route): step 1/1.</text>
</comment>
<comment type="similarity">
    <text evidence="1">Belongs to the archaeal riboflavin kinase family.</text>
</comment>
<evidence type="ECO:0000255" key="1">
    <source>
        <dbReference type="HAMAP-Rule" id="MF_01285"/>
    </source>
</evidence>
<organism>
    <name type="scientific">Methanococcus vannielii (strain ATCC 35089 / DSM 1224 / JCM 13029 / OCM 148 / SB)</name>
    <dbReference type="NCBI Taxonomy" id="406327"/>
    <lineage>
        <taxon>Archaea</taxon>
        <taxon>Methanobacteriati</taxon>
        <taxon>Methanobacteriota</taxon>
        <taxon>Methanomada group</taxon>
        <taxon>Methanococci</taxon>
        <taxon>Methanococcales</taxon>
        <taxon>Methanococcaceae</taxon>
        <taxon>Methanococcus</taxon>
    </lineage>
</organism>